<accession>P42398</accession>
<comment type="similarity">
    <text evidence="2">Belongs to the acyl coenzyme A hydrolase family.</text>
</comment>
<comment type="sequence caution" evidence="2">
    <conflict type="erroneous initiation">
        <sequence resource="EMBL-CDS" id="CAA79506"/>
    </conflict>
</comment>
<name>Y263_BUCAP</name>
<organism>
    <name type="scientific">Buchnera aphidicola subsp. Schizaphis graminum (strain Sg)</name>
    <dbReference type="NCBI Taxonomy" id="198804"/>
    <lineage>
        <taxon>Bacteria</taxon>
        <taxon>Pseudomonadati</taxon>
        <taxon>Pseudomonadota</taxon>
        <taxon>Gammaproteobacteria</taxon>
        <taxon>Enterobacterales</taxon>
        <taxon>Erwiniaceae</taxon>
        <taxon>Buchnera</taxon>
    </lineage>
</organism>
<sequence length="135" mass="14700">MPKKNKLPQGTIVLKTLTMRSDTNANGDIFGGWIMSQMDMGGAILAKEIAGGRVVTVQVNGITFFKPVSVGDIVSCYAHCIKTGNSSITINLEVWIKKIYSKPLGQFYCAAEAIFIYVAIDETGKPRELLPMSII</sequence>
<keyword id="KW-0378">Hydrolase</keyword>
<gene>
    <name type="ordered locus">BUsg_263</name>
</gene>
<evidence type="ECO:0000255" key="1">
    <source>
        <dbReference type="PROSITE-ProRule" id="PRU01106"/>
    </source>
</evidence>
<evidence type="ECO:0000305" key="2"/>
<dbReference type="EC" id="3.1.2.-"/>
<dbReference type="EMBL" id="AE013218">
    <property type="protein sequence ID" value="AAM67821.1"/>
    <property type="molecule type" value="Genomic_DNA"/>
</dbReference>
<dbReference type="EMBL" id="Z19055">
    <property type="protein sequence ID" value="CAA79506.1"/>
    <property type="status" value="ALT_INIT"/>
    <property type="molecule type" value="Genomic_DNA"/>
</dbReference>
<dbReference type="PIR" id="S36434">
    <property type="entry name" value="G49897"/>
</dbReference>
<dbReference type="RefSeq" id="WP_011053788.1">
    <property type="nucleotide sequence ID" value="NC_004061.1"/>
</dbReference>
<dbReference type="SMR" id="P42398"/>
<dbReference type="STRING" id="198804.BUsg_263"/>
<dbReference type="GeneID" id="93003733"/>
<dbReference type="KEGG" id="bas:BUsg_263"/>
<dbReference type="eggNOG" id="COG1607">
    <property type="taxonomic scope" value="Bacteria"/>
</dbReference>
<dbReference type="HOGENOM" id="CLU_050164_2_0_6"/>
<dbReference type="Proteomes" id="UP000000416">
    <property type="component" value="Chromosome"/>
</dbReference>
<dbReference type="GO" id="GO:0005829">
    <property type="term" value="C:cytosol"/>
    <property type="evidence" value="ECO:0007669"/>
    <property type="project" value="TreeGrafter"/>
</dbReference>
<dbReference type="GO" id="GO:0052816">
    <property type="term" value="F:long-chain fatty acyl-CoA hydrolase activity"/>
    <property type="evidence" value="ECO:0007669"/>
    <property type="project" value="TreeGrafter"/>
</dbReference>
<dbReference type="GO" id="GO:0006637">
    <property type="term" value="P:acyl-CoA metabolic process"/>
    <property type="evidence" value="ECO:0007669"/>
    <property type="project" value="TreeGrafter"/>
</dbReference>
<dbReference type="GO" id="GO:0009062">
    <property type="term" value="P:fatty acid catabolic process"/>
    <property type="evidence" value="ECO:0007669"/>
    <property type="project" value="TreeGrafter"/>
</dbReference>
<dbReference type="CDD" id="cd03442">
    <property type="entry name" value="BFIT_BACH"/>
    <property type="match status" value="1"/>
</dbReference>
<dbReference type="FunFam" id="3.10.129.10:FF:000008">
    <property type="entry name" value="Acyl-CoA thioester hydrolase"/>
    <property type="match status" value="1"/>
</dbReference>
<dbReference type="Gene3D" id="3.10.129.10">
    <property type="entry name" value="Hotdog Thioesterase"/>
    <property type="match status" value="1"/>
</dbReference>
<dbReference type="InterPro" id="IPR040170">
    <property type="entry name" value="Cytosol_ACT"/>
</dbReference>
<dbReference type="InterPro" id="IPR033120">
    <property type="entry name" value="HOTDOG_ACOT"/>
</dbReference>
<dbReference type="InterPro" id="IPR029069">
    <property type="entry name" value="HotDog_dom_sf"/>
</dbReference>
<dbReference type="InterPro" id="IPR006683">
    <property type="entry name" value="Thioestr_dom"/>
</dbReference>
<dbReference type="NCBIfam" id="NF007970">
    <property type="entry name" value="PRK10694.1"/>
    <property type="match status" value="1"/>
</dbReference>
<dbReference type="PANTHER" id="PTHR11049">
    <property type="entry name" value="ACYL COENZYME A THIOESTER HYDROLASE"/>
    <property type="match status" value="1"/>
</dbReference>
<dbReference type="PANTHER" id="PTHR11049:SF5">
    <property type="entry name" value="ACYL-COA THIOESTER HYDROLASE YCIA"/>
    <property type="match status" value="1"/>
</dbReference>
<dbReference type="Pfam" id="PF03061">
    <property type="entry name" value="4HBT"/>
    <property type="match status" value="1"/>
</dbReference>
<dbReference type="SUPFAM" id="SSF54637">
    <property type="entry name" value="Thioesterase/thiol ester dehydrase-isomerase"/>
    <property type="match status" value="1"/>
</dbReference>
<dbReference type="PROSITE" id="PS51770">
    <property type="entry name" value="HOTDOG_ACOT"/>
    <property type="match status" value="1"/>
</dbReference>
<proteinExistence type="inferred from homology"/>
<reference key="1">
    <citation type="journal article" date="2002" name="Science">
        <title>50 million years of genomic stasis in endosymbiotic bacteria.</title>
        <authorList>
            <person name="Tamas I."/>
            <person name="Klasson L."/>
            <person name="Canbaeck B."/>
            <person name="Naeslund A.K."/>
            <person name="Eriksson A.-S."/>
            <person name="Wernegreen J.J."/>
            <person name="Sandstroem J.P."/>
            <person name="Moran N.A."/>
            <person name="Andersson S.G.E."/>
        </authorList>
    </citation>
    <scope>NUCLEOTIDE SEQUENCE [LARGE SCALE GENOMIC DNA]</scope>
    <source>
        <strain>Sg</strain>
    </source>
</reference>
<reference key="2">
    <citation type="journal article" date="1993" name="J. Bacteriol.">
        <title>Molecular cloning and nucleotide sequence of a putative trpDC(F)BA operon in Buchnera aphidicola (endosymbiont of the aphid Schizaphis graminum).</title>
        <authorList>
            <person name="Munson M.A."/>
            <person name="Baumann P."/>
        </authorList>
    </citation>
    <scope>NUCLEOTIDE SEQUENCE [GENOMIC DNA] OF 1-92</scope>
</reference>
<protein>
    <recommendedName>
        <fullName>Uncharacterized acyl-CoA thioester hydrolase BUsg_263</fullName>
        <ecNumber>3.1.2.-</ecNumber>
    </recommendedName>
</protein>
<feature type="chain" id="PRO_0000053824" description="Uncharacterized acyl-CoA thioester hydrolase BUsg_263">
    <location>
        <begin position="1"/>
        <end position="135"/>
    </location>
</feature>
<feature type="domain" description="HotDog ACOT-type" evidence="1">
    <location>
        <begin position="8"/>
        <end position="123"/>
    </location>
</feature>